<protein>
    <recommendedName>
        <fullName evidence="1">4-diphosphocytidyl-2-C-methyl-D-erythritol kinase</fullName>
        <shortName evidence="1">CMK</shortName>
        <ecNumber evidence="1">2.7.1.148</ecNumber>
    </recommendedName>
    <alternativeName>
        <fullName evidence="1">4-(cytidine-5'-diphospho)-2-C-methyl-D-erythritol kinase</fullName>
    </alternativeName>
</protein>
<sequence>MTISGVLAGCPAPAKLNLFLHVVGRRDDGYHLLQTAFRLLDWGDRLDFRVRDDGLIRRTNQVAGVAEDDDLVVRAARRLQQATGTPLGADITLHKVLPMGGGVGGGSSDAATTLIALNHLWQTGLTRADLQQLGLALGADVPFFIYGRDAFAEGVGEAFQPLALPAAVYVVLSPEVSVPTAEIFSAKGLTRDTPPIRIADFAASPTRNDLQATACSRYPEVARAINWLEHYAPARMTGSGACVFAEVASEIEADEIVSLCPARWKAWKAKSLARHPLYGLLD</sequence>
<comment type="function">
    <text evidence="1">Catalyzes the phosphorylation of the position 2 hydroxy group of 4-diphosphocytidyl-2C-methyl-D-erythritol.</text>
</comment>
<comment type="catalytic activity">
    <reaction evidence="1">
        <text>4-CDP-2-C-methyl-D-erythritol + ATP = 4-CDP-2-C-methyl-D-erythritol 2-phosphate + ADP + H(+)</text>
        <dbReference type="Rhea" id="RHEA:18437"/>
        <dbReference type="ChEBI" id="CHEBI:15378"/>
        <dbReference type="ChEBI" id="CHEBI:30616"/>
        <dbReference type="ChEBI" id="CHEBI:57823"/>
        <dbReference type="ChEBI" id="CHEBI:57919"/>
        <dbReference type="ChEBI" id="CHEBI:456216"/>
        <dbReference type="EC" id="2.7.1.148"/>
    </reaction>
</comment>
<comment type="pathway">
    <text evidence="1">Isoprenoid biosynthesis; isopentenyl diphosphate biosynthesis via DXP pathway; isopentenyl diphosphate from 1-deoxy-D-xylulose 5-phosphate: step 3/6.</text>
</comment>
<comment type="similarity">
    <text evidence="1">Belongs to the GHMP kinase family. IspE subfamily.</text>
</comment>
<organism>
    <name type="scientific">Azoarcus sp. (strain BH72)</name>
    <dbReference type="NCBI Taxonomy" id="418699"/>
    <lineage>
        <taxon>Bacteria</taxon>
        <taxon>Pseudomonadati</taxon>
        <taxon>Pseudomonadota</taxon>
        <taxon>Betaproteobacteria</taxon>
        <taxon>Rhodocyclales</taxon>
        <taxon>Zoogloeaceae</taxon>
        <taxon>Azoarcus</taxon>
    </lineage>
</organism>
<reference key="1">
    <citation type="journal article" date="2006" name="Nat. Biotechnol.">
        <title>Complete genome of the mutualistic, N2-fixing grass endophyte Azoarcus sp. strain BH72.</title>
        <authorList>
            <person name="Krause A."/>
            <person name="Ramakumar A."/>
            <person name="Bartels D."/>
            <person name="Battistoni F."/>
            <person name="Bekel T."/>
            <person name="Boch J."/>
            <person name="Boehm M."/>
            <person name="Friedrich F."/>
            <person name="Hurek T."/>
            <person name="Krause L."/>
            <person name="Linke B."/>
            <person name="McHardy A.C."/>
            <person name="Sarkar A."/>
            <person name="Schneiker S."/>
            <person name="Syed A.A."/>
            <person name="Thauer R."/>
            <person name="Vorhoelter F.-J."/>
            <person name="Weidner S."/>
            <person name="Puehler A."/>
            <person name="Reinhold-Hurek B."/>
            <person name="Kaiser O."/>
            <person name="Goesmann A."/>
        </authorList>
    </citation>
    <scope>NUCLEOTIDE SEQUENCE [LARGE SCALE GENOMIC DNA]</scope>
    <source>
        <strain>BH72</strain>
    </source>
</reference>
<evidence type="ECO:0000255" key="1">
    <source>
        <dbReference type="HAMAP-Rule" id="MF_00061"/>
    </source>
</evidence>
<gene>
    <name evidence="1" type="primary">ispE</name>
    <name type="ordered locus">azo0756</name>
</gene>
<name>ISPE_AZOSB</name>
<accession>A1K3G8</accession>
<feature type="chain" id="PRO_0000335700" description="4-diphosphocytidyl-2-C-methyl-D-erythritol kinase">
    <location>
        <begin position="1"/>
        <end position="282"/>
    </location>
</feature>
<feature type="active site" evidence="1">
    <location>
        <position position="15"/>
    </location>
</feature>
<feature type="active site" evidence="1">
    <location>
        <position position="140"/>
    </location>
</feature>
<feature type="binding site" evidence="1">
    <location>
        <begin position="98"/>
        <end position="108"/>
    </location>
    <ligand>
        <name>ATP</name>
        <dbReference type="ChEBI" id="CHEBI:30616"/>
    </ligand>
</feature>
<keyword id="KW-0067">ATP-binding</keyword>
<keyword id="KW-0414">Isoprene biosynthesis</keyword>
<keyword id="KW-0418">Kinase</keyword>
<keyword id="KW-0547">Nucleotide-binding</keyword>
<keyword id="KW-1185">Reference proteome</keyword>
<keyword id="KW-0808">Transferase</keyword>
<dbReference type="EC" id="2.7.1.148" evidence="1"/>
<dbReference type="EMBL" id="AM406670">
    <property type="protein sequence ID" value="CAL93373.1"/>
    <property type="molecule type" value="Genomic_DNA"/>
</dbReference>
<dbReference type="RefSeq" id="WP_011764490.1">
    <property type="nucleotide sequence ID" value="NC_008702.1"/>
</dbReference>
<dbReference type="SMR" id="A1K3G8"/>
<dbReference type="STRING" id="62928.azo0756"/>
<dbReference type="KEGG" id="azo:azo0756"/>
<dbReference type="eggNOG" id="COG1947">
    <property type="taxonomic scope" value="Bacteria"/>
</dbReference>
<dbReference type="HOGENOM" id="CLU_053057_3_0_4"/>
<dbReference type="UniPathway" id="UPA00056">
    <property type="reaction ID" value="UER00094"/>
</dbReference>
<dbReference type="Proteomes" id="UP000002588">
    <property type="component" value="Chromosome"/>
</dbReference>
<dbReference type="GO" id="GO:0050515">
    <property type="term" value="F:4-(cytidine 5'-diphospho)-2-C-methyl-D-erythritol kinase activity"/>
    <property type="evidence" value="ECO:0007669"/>
    <property type="project" value="UniProtKB-UniRule"/>
</dbReference>
<dbReference type="GO" id="GO:0005524">
    <property type="term" value="F:ATP binding"/>
    <property type="evidence" value="ECO:0007669"/>
    <property type="project" value="UniProtKB-UniRule"/>
</dbReference>
<dbReference type="GO" id="GO:0019288">
    <property type="term" value="P:isopentenyl diphosphate biosynthetic process, methylerythritol 4-phosphate pathway"/>
    <property type="evidence" value="ECO:0007669"/>
    <property type="project" value="UniProtKB-UniRule"/>
</dbReference>
<dbReference type="GO" id="GO:0016114">
    <property type="term" value="P:terpenoid biosynthetic process"/>
    <property type="evidence" value="ECO:0007669"/>
    <property type="project" value="InterPro"/>
</dbReference>
<dbReference type="Gene3D" id="3.30.230.10">
    <property type="match status" value="1"/>
</dbReference>
<dbReference type="Gene3D" id="3.30.70.890">
    <property type="entry name" value="GHMP kinase, C-terminal domain"/>
    <property type="match status" value="1"/>
</dbReference>
<dbReference type="HAMAP" id="MF_00061">
    <property type="entry name" value="IspE"/>
    <property type="match status" value="1"/>
</dbReference>
<dbReference type="InterPro" id="IPR013750">
    <property type="entry name" value="GHMP_kinase_C_dom"/>
</dbReference>
<dbReference type="InterPro" id="IPR036554">
    <property type="entry name" value="GHMP_kinase_C_sf"/>
</dbReference>
<dbReference type="InterPro" id="IPR006204">
    <property type="entry name" value="GHMP_kinase_N_dom"/>
</dbReference>
<dbReference type="InterPro" id="IPR004424">
    <property type="entry name" value="IspE"/>
</dbReference>
<dbReference type="InterPro" id="IPR020568">
    <property type="entry name" value="Ribosomal_Su5_D2-typ_SF"/>
</dbReference>
<dbReference type="InterPro" id="IPR014721">
    <property type="entry name" value="Ribsml_uS5_D2-typ_fold_subgr"/>
</dbReference>
<dbReference type="NCBIfam" id="TIGR00154">
    <property type="entry name" value="ispE"/>
    <property type="match status" value="1"/>
</dbReference>
<dbReference type="PANTHER" id="PTHR43527">
    <property type="entry name" value="4-DIPHOSPHOCYTIDYL-2-C-METHYL-D-ERYTHRITOL KINASE, CHLOROPLASTIC"/>
    <property type="match status" value="1"/>
</dbReference>
<dbReference type="PANTHER" id="PTHR43527:SF2">
    <property type="entry name" value="4-DIPHOSPHOCYTIDYL-2-C-METHYL-D-ERYTHRITOL KINASE, CHLOROPLASTIC"/>
    <property type="match status" value="1"/>
</dbReference>
<dbReference type="Pfam" id="PF08544">
    <property type="entry name" value="GHMP_kinases_C"/>
    <property type="match status" value="1"/>
</dbReference>
<dbReference type="Pfam" id="PF00288">
    <property type="entry name" value="GHMP_kinases_N"/>
    <property type="match status" value="1"/>
</dbReference>
<dbReference type="PIRSF" id="PIRSF010376">
    <property type="entry name" value="IspE"/>
    <property type="match status" value="1"/>
</dbReference>
<dbReference type="SUPFAM" id="SSF55060">
    <property type="entry name" value="GHMP Kinase, C-terminal domain"/>
    <property type="match status" value="1"/>
</dbReference>
<dbReference type="SUPFAM" id="SSF54211">
    <property type="entry name" value="Ribosomal protein S5 domain 2-like"/>
    <property type="match status" value="1"/>
</dbReference>
<proteinExistence type="inferred from homology"/>